<feature type="signal peptide" evidence="16">
    <location>
        <begin position="1"/>
        <end position="30"/>
    </location>
</feature>
<feature type="chain" id="PRO_0000019491" description="Neurexin-1">
    <location>
        <begin position="31"/>
        <end position="1530"/>
    </location>
</feature>
<feature type="topological domain" description="Extracellular" evidence="3">
    <location>
        <begin position="31"/>
        <end position="1454"/>
    </location>
</feature>
<feature type="transmembrane region" description="Helical" evidence="3">
    <location>
        <begin position="1455"/>
        <end position="1475"/>
    </location>
</feature>
<feature type="topological domain" description="Cytoplasmic" evidence="3">
    <location>
        <begin position="1476"/>
        <end position="1530"/>
    </location>
</feature>
<feature type="domain" description="Laminin G-like 1" evidence="5">
    <location>
        <begin position="31"/>
        <end position="217"/>
    </location>
</feature>
<feature type="domain" description="EGF-like 1" evidence="4">
    <location>
        <begin position="213"/>
        <end position="255"/>
    </location>
</feature>
<feature type="domain" description="Laminin G-like 2" evidence="5">
    <location>
        <begin position="299"/>
        <end position="496"/>
    </location>
</feature>
<feature type="domain" description="Laminin G-like 3" evidence="5">
    <location>
        <begin position="503"/>
        <end position="695"/>
    </location>
</feature>
<feature type="domain" description="EGF-like 2" evidence="4">
    <location>
        <begin position="699"/>
        <end position="736"/>
    </location>
</feature>
<feature type="domain" description="Laminin G-like 4" evidence="5">
    <location>
        <begin position="741"/>
        <end position="914"/>
    </location>
</feature>
<feature type="domain" description="Laminin G-like 5" evidence="5">
    <location>
        <begin position="928"/>
        <end position="1103"/>
    </location>
</feature>
<feature type="domain" description="EGF-like 3" evidence="4">
    <location>
        <begin position="1106"/>
        <end position="1143"/>
    </location>
</feature>
<feature type="domain" description="Laminin G-like 6" evidence="5">
    <location>
        <begin position="1149"/>
        <end position="1347"/>
    </location>
</feature>
<feature type="region of interest" description="Disordered" evidence="6">
    <location>
        <begin position="196"/>
        <end position="219"/>
    </location>
</feature>
<feature type="region of interest" description="Disordered" evidence="6">
    <location>
        <begin position="1412"/>
        <end position="1443"/>
    </location>
</feature>
<feature type="region of interest" description="Disordered" evidence="6">
    <location>
        <begin position="1497"/>
        <end position="1530"/>
    </location>
</feature>
<feature type="region of interest" description="Interaction with CASK" evidence="2">
    <location>
        <begin position="1497"/>
        <end position="1523"/>
    </location>
</feature>
<feature type="binding site" evidence="1">
    <location>
        <position position="345"/>
    </location>
    <ligand>
        <name>Ca(2+)</name>
        <dbReference type="ChEBI" id="CHEBI:29108"/>
        <label>1</label>
    </ligand>
</feature>
<feature type="binding site" evidence="1">
    <location>
        <position position="362"/>
    </location>
    <ligand>
        <name>Ca(2+)</name>
        <dbReference type="ChEBI" id="CHEBI:29108"/>
        <label>1</label>
    </ligand>
</feature>
<feature type="binding site" evidence="1">
    <location>
        <position position="430"/>
    </location>
    <ligand>
        <name>Ca(2+)</name>
        <dbReference type="ChEBI" id="CHEBI:29108"/>
        <label>1</label>
    </ligand>
</feature>
<feature type="binding site" evidence="1">
    <location>
        <position position="788"/>
    </location>
    <ligand>
        <name>Ca(2+)</name>
        <dbReference type="ChEBI" id="CHEBI:29108"/>
        <label>2</label>
    </ligand>
</feature>
<feature type="binding site" evidence="1">
    <location>
        <position position="805"/>
    </location>
    <ligand>
        <name>Ca(2+)</name>
        <dbReference type="ChEBI" id="CHEBI:29108"/>
        <label>2</label>
    </ligand>
</feature>
<feature type="binding site" evidence="1">
    <location>
        <position position="864"/>
    </location>
    <ligand>
        <name>Ca(2+)</name>
        <dbReference type="ChEBI" id="CHEBI:29108"/>
        <label>2</label>
    </ligand>
</feature>
<feature type="binding site" evidence="2">
    <location>
        <position position="1199"/>
    </location>
    <ligand>
        <name>Ca(2+)</name>
        <dbReference type="ChEBI" id="CHEBI:29108"/>
        <label>3</label>
    </ligand>
</feature>
<feature type="binding site" evidence="2">
    <location>
        <position position="1216"/>
    </location>
    <ligand>
        <name>Ca(2+)</name>
        <dbReference type="ChEBI" id="CHEBI:29108"/>
        <label>3</label>
    </ligand>
</feature>
<feature type="binding site" evidence="2">
    <location>
        <position position="1298"/>
    </location>
    <ligand>
        <name>Ca(2+)</name>
        <dbReference type="ChEBI" id="CHEBI:29108"/>
        <label>3</label>
    </ligand>
</feature>
<feature type="binding site" evidence="2">
    <location>
        <position position="1300"/>
    </location>
    <ligand>
        <name>Ca(2+)</name>
        <dbReference type="ChEBI" id="CHEBI:29108"/>
        <label>3</label>
    </ligand>
</feature>
<feature type="glycosylation site" description="N-linked (GlcNAc...) asparagine" evidence="3">
    <location>
        <position position="125"/>
    </location>
</feature>
<feature type="glycosylation site" description="N-linked (GlcNAc...) asparagine" evidence="3">
    <location>
        <position position="190"/>
    </location>
</feature>
<feature type="glycosylation site" description="N-linked (GlcNAc...) asparagine" evidence="3">
    <location>
        <position position="813"/>
    </location>
</feature>
<feature type="glycosylation site" description="N-linked (GlcNAc...) asparagine" evidence="3">
    <location>
        <position position="1246"/>
    </location>
</feature>
<feature type="glycosylation site" description="O-linked (Xyl...) (heparan sulfate) serine" evidence="2">
    <location>
        <position position="1408"/>
    </location>
</feature>
<feature type="disulfide bond" evidence="4">
    <location>
        <begin position="228"/>
        <end position="243"/>
    </location>
</feature>
<feature type="disulfide bond" evidence="4">
    <location>
        <begin position="245"/>
        <end position="255"/>
    </location>
</feature>
<feature type="disulfide bond" evidence="1">
    <location>
        <begin position="460"/>
        <end position="496"/>
    </location>
</feature>
<feature type="disulfide bond" evidence="1">
    <location>
        <begin position="666"/>
        <end position="695"/>
    </location>
</feature>
<feature type="disulfide bond" evidence="1">
    <location>
        <begin position="703"/>
        <end position="714"/>
    </location>
</feature>
<feature type="disulfide bond" evidence="1">
    <location>
        <begin position="708"/>
        <end position="723"/>
    </location>
</feature>
<feature type="disulfide bond" evidence="1">
    <location>
        <begin position="725"/>
        <end position="735"/>
    </location>
</feature>
<feature type="disulfide bond" evidence="1">
    <location>
        <begin position="906"/>
        <end position="914"/>
    </location>
</feature>
<feature type="disulfide bond" evidence="1">
    <location>
        <begin position="1075"/>
        <end position="1103"/>
    </location>
</feature>
<feature type="disulfide bond" evidence="1">
    <location>
        <begin position="1110"/>
        <end position="1121"/>
    </location>
</feature>
<feature type="disulfide bond" evidence="1">
    <location>
        <begin position="1115"/>
        <end position="1130"/>
    </location>
</feature>
<feature type="disulfide bond" evidence="1">
    <location>
        <begin position="1132"/>
        <end position="1142"/>
    </location>
</feature>
<feature type="splice variant" id="VSP_003487" description="In isoform 7a." evidence="18">
    <location>
        <begin position="258"/>
        <end position="277"/>
    </location>
</feature>
<feature type="splice variant" id="VSP_003486" description="In isoform 3a and isoform 5a." evidence="18">
    <location>
        <position position="258"/>
    </location>
</feature>
<feature type="splice variant" id="VSP_022559" description="In isoform 6a." evidence="18">
    <location>
        <begin position="264"/>
        <end position="273"/>
    </location>
</feature>
<feature type="splice variant" id="VSP_003488" description="In isoform 4a and isoform 5a." evidence="18">
    <location>
        <begin position="274"/>
        <end position="277"/>
    </location>
</feature>
<feature type="splice variant" id="VSP_022560" description="In isoform 2a and isoform 13a." evidence="17">
    <location>
        <begin position="278"/>
        <end position="293"/>
    </location>
</feature>
<feature type="splice variant" id="VSP_003489" description="In isoform 9a." evidence="18">
    <location>
        <begin position="395"/>
        <end position="409"/>
    </location>
</feature>
<feature type="splice variant" id="VSP_003490" description="In isoform 8a and isoform 13a." evidence="17">
    <location>
        <begin position="403"/>
        <end position="409"/>
    </location>
</feature>
<feature type="splice variant" id="VSP_003491" description="In isoform 10a." evidence="18">
    <original>DCIRINCNSS</original>
    <variation>G</variation>
    <location>
        <begin position="806"/>
        <end position="815"/>
    </location>
</feature>
<feature type="splice variant" id="VSP_003492" description="In isoform 11a." evidence="18">
    <location>
        <begin position="1263"/>
        <end position="1292"/>
    </location>
</feature>
<feature type="splice variant" id="VSP_003493" description="In isoform 12a." evidence="18">
    <location>
        <begin position="1426"/>
        <end position="1427"/>
    </location>
</feature>
<feature type="strand" evidence="19">
    <location>
        <begin position="1146"/>
        <end position="1161"/>
    </location>
</feature>
<feature type="helix" evidence="19">
    <location>
        <begin position="1164"/>
        <end position="1166"/>
    </location>
</feature>
<feature type="strand" evidence="19">
    <location>
        <begin position="1170"/>
        <end position="1180"/>
    </location>
</feature>
<feature type="strand" evidence="19">
    <location>
        <begin position="1184"/>
        <end position="1194"/>
    </location>
</feature>
<feature type="strand" evidence="19">
    <location>
        <begin position="1200"/>
        <end position="1206"/>
    </location>
</feature>
<feature type="strand" evidence="19">
    <location>
        <begin position="1209"/>
        <end position="1219"/>
    </location>
</feature>
<feature type="strand" evidence="19">
    <location>
        <begin position="1221"/>
        <end position="1224"/>
    </location>
</feature>
<feature type="strand" evidence="19">
    <location>
        <begin position="1232"/>
        <end position="1234"/>
    </location>
</feature>
<feature type="strand" evidence="19">
    <location>
        <begin position="1236"/>
        <end position="1243"/>
    </location>
</feature>
<feature type="strand" evidence="19">
    <location>
        <begin position="1246"/>
        <end position="1251"/>
    </location>
</feature>
<feature type="strand" evidence="19">
    <location>
        <begin position="1257"/>
        <end position="1259"/>
    </location>
</feature>
<feature type="strand" evidence="19">
    <location>
        <begin position="1301"/>
        <end position="1309"/>
    </location>
</feature>
<feature type="turn" evidence="19">
    <location>
        <begin position="1310"/>
        <end position="1313"/>
    </location>
</feature>
<feature type="strand" evidence="19">
    <location>
        <begin position="1318"/>
        <end position="1325"/>
    </location>
</feature>
<feature type="helix" evidence="19">
    <location>
        <begin position="1330"/>
        <end position="1335"/>
    </location>
</feature>
<feature type="strand" evidence="19">
    <location>
        <begin position="1341"/>
        <end position="1350"/>
    </location>
</feature>
<keyword id="KW-0002">3D-structure</keyword>
<keyword id="KW-0877">Alternative promoter usage</keyword>
<keyword id="KW-0025">Alternative splicing</keyword>
<keyword id="KW-0106">Calcium</keyword>
<keyword id="KW-0130">Cell adhesion</keyword>
<keyword id="KW-1003">Cell membrane</keyword>
<keyword id="KW-0966">Cell projection</keyword>
<keyword id="KW-0903">Direct protein sequencing</keyword>
<keyword id="KW-1015">Disulfide bond</keyword>
<keyword id="KW-0245">EGF-like domain</keyword>
<keyword id="KW-0325">Glycoprotein</keyword>
<keyword id="KW-0357">Heparan sulfate</keyword>
<keyword id="KW-0472">Membrane</keyword>
<keyword id="KW-0479">Metal-binding</keyword>
<keyword id="KW-0654">Proteoglycan</keyword>
<keyword id="KW-1185">Reference proteome</keyword>
<keyword id="KW-0677">Repeat</keyword>
<keyword id="KW-0732">Signal</keyword>
<keyword id="KW-0770">Synapse</keyword>
<keyword id="KW-0812">Transmembrane</keyword>
<keyword id="KW-1133">Transmembrane helix</keyword>
<organism>
    <name type="scientific">Rattus norvegicus</name>
    <name type="common">Rat</name>
    <dbReference type="NCBI Taxonomy" id="10116"/>
    <lineage>
        <taxon>Eukaryota</taxon>
        <taxon>Metazoa</taxon>
        <taxon>Chordata</taxon>
        <taxon>Craniata</taxon>
        <taxon>Vertebrata</taxon>
        <taxon>Euteleostomi</taxon>
        <taxon>Mammalia</taxon>
        <taxon>Eutheria</taxon>
        <taxon>Euarchontoglires</taxon>
        <taxon>Glires</taxon>
        <taxon>Rodentia</taxon>
        <taxon>Myomorpha</taxon>
        <taxon>Muroidea</taxon>
        <taxon>Muridae</taxon>
        <taxon>Murinae</taxon>
        <taxon>Rattus</taxon>
    </lineage>
</organism>
<protein>
    <recommendedName>
        <fullName>Neurexin-1</fullName>
    </recommendedName>
    <alternativeName>
        <fullName>Neurexin I-alpha</fullName>
    </alternativeName>
    <alternativeName>
        <fullName>Neurexin-1-alpha</fullName>
    </alternativeName>
</protein>
<accession>Q63372</accession>
<comment type="function">
    <text evidence="2 12 13">Cell surface protein involved in cell-cell-interactions, exocytosis of secretory granules and regulation of signal transmission (By similarity). Function is isoform-specific (By similarity). Alpha-type isoforms have a long N-terminus with six laminin G-like domains and play an important role in synaptic signal transmission (By similarity). Alpha-type isoforms play a role in the regulation of calcium channel activity and Ca(2+)-triggered neurotransmitter release at synapses and at neuromuscular junctions (By similarity). They play an important role in Ca(2+)-triggered exocytosis of secretory granules in pituitary gland (By similarity). They may affect their functions at synapses and in endocrine cells via their interactions with proteins from the exocytotic machinery (By similarity). Likewise, alpha-type isoforms play a role in regulating the activity of postsynaptic NMDA receptors, a subtype of glutamate-gated ion channels (By similarity). Both alpha-type and beta-type isoforms may play a role in the formation or maintenance of synaptic junctions via their interactions (via the extracellular domains) with neuroligin family members, CBLN1 or CBLN2 (By similarity). In vitro, triggers the de novo formation of presynaptic structures (PubMed:20064387, PubMed:20064388). May be involved in specification of excitatory synapses (PubMed:20064387, PubMed:20064388). Alpha-type isoforms were first identified as receptors for alpha-latrotoxin from spider venom (PubMed:20064387, PubMed:20064388).</text>
</comment>
<comment type="subunit">
    <text evidence="2 7 8 9 10 11 12 13 15 16">Interacts (via laminin G-like domain 2 and/or laminin G-like domain 6) with NLGN1 forming a heterotetramer, where one NLGN1 dimer interacts with one NRXN1 dimer (By similarity). Also interacts (via laminin G-like domain 2 and/or laminin G-like domain 6) with NLGN2, NLGN3 and NLGN4L; interactions with NLGN1, NLGN2, NLGN3 and NLGN4L are calcium-dependent (PubMed:18093522). Interacts (via cytoplasmic C-terminal region) with CASK (via the PDZ, SH3 and guanylate kinase-like domains) (PubMed:12040031, PubMed:8786425). Interacts (via cytoplasmic C-terminus) with CASKIN1 and APBA1 (PubMed:12040031). Interacts (via laminin G-like domain 2) with NXPH1 and NXPH3 (PubMed:9856994). Alpha-type isoforms (neurexin-1-alpha) interact (via laminin G-like domain 2 and/or laminin G-like domain 6) with DAG1 (via alpha-dystroglycan chain) (PubMed:11470830). Interacts with LRRTM1, LRRTM2, LRRTM3 and LRRTM4 (PubMed:20064387, PubMed:20064388). Interacts with SYT13 and SYTL1 (By similarity). Interacts with CBLN1, CBLN2 and, less avidly, with CBLN4 (By similarity). Interacts with CLSTN3 (By similarity). Alpha-type isoforms interact with alpha-latrotoxin from spider venom (PubMed:10197529, PubMed:1621094).</text>
</comment>
<comment type="subcellular location">
    <subcellularLocation>
        <location evidence="2">Presynaptic cell membrane</location>
        <topology evidence="3">Single-pass type I membrane protein</topology>
    </subcellularLocation>
</comment>
<comment type="alternative products">
    <event type="alternative promoter"/>
    <event type="alternative splicing"/>
    <isoform>
        <id>Q63372-2</id>
        <name>1a</name>
        <name>Alpha-1A2A3A4A5A</name>
        <sequence type="displayed"/>
    </isoform>
    <isoform>
        <id>Q63372-1</id>
        <name>2a</name>
        <name>Alpha-1B</name>
        <sequence type="described" ref="VSP_022560"/>
    </isoform>
    <isoform>
        <id>Q63372-3</id>
        <name>3a</name>
        <name>Alpha-1C</name>
        <sequence type="described" ref="VSP_003486"/>
    </isoform>
    <isoform>
        <id>Q63372-4</id>
        <name>4a</name>
        <name>Alpha-1D</name>
        <sequence type="described" ref="VSP_003488"/>
    </isoform>
    <isoform>
        <id>Q63372-5</id>
        <name>5a</name>
        <name>Alpha-1E</name>
        <sequence type="described" ref="VSP_003486 VSP_003488"/>
    </isoform>
    <isoform>
        <id>Q63372-6</id>
        <name>6a</name>
        <name>Alpha-1F</name>
        <sequence type="described" ref="VSP_022559"/>
    </isoform>
    <isoform>
        <id>Q63372-7</id>
        <name>7a</name>
        <name>Alpha-1G</name>
        <sequence type="described" ref="VSP_003487"/>
    </isoform>
    <isoform>
        <id>Q63372-8</id>
        <name>8a</name>
        <name>Alpha-2B</name>
        <sequence type="described" ref="VSP_003490"/>
    </isoform>
    <isoform>
        <id>Q63372-9</id>
        <name>9a</name>
        <name>Alpha-2C</name>
        <sequence type="described" ref="VSP_003489"/>
    </isoform>
    <isoform>
        <id>Q63372-10</id>
        <name>10a</name>
        <name>Alpha-3B</name>
        <sequence type="described" ref="VSP_003491"/>
    </isoform>
    <isoform>
        <id>Q63372-11</id>
        <name>11a</name>
        <name>Alpha-4B</name>
        <sequence type="described" ref="VSP_003492"/>
    </isoform>
    <isoform>
        <id>Q63372-12</id>
        <name>12a</name>
        <name>Alpha-5B</name>
        <sequence type="described" ref="VSP_003493"/>
    </isoform>
    <isoform>
        <id>Q63372-13</id>
        <name>13a</name>
        <name>Alpha-1B2B</name>
        <sequence type="described" ref="VSP_022560 VSP_003490"/>
    </isoform>
    <isoform>
        <id>Q63373-1</id>
        <name>1b</name>
        <name>Beta-4A5A</name>
        <sequence type="external"/>
    </isoform>
    <isoform>
        <id>Q63373-2</id>
        <name>2b</name>
        <name>Beta-4A5B</name>
        <sequence type="external"/>
    </isoform>
    <isoform>
        <id>Q63373-3</id>
        <name>3b</name>
        <name>Beta-4B5A</name>
        <sequence type="external"/>
    </isoform>
    <isoform>
        <id>Q63373-4</id>
        <name>4b</name>
        <name>Beta-4B5B</name>
        <sequence type="external"/>
    </isoform>
    <text evidence="10 14">Two isoform types, alpha-type and beta-type are produced by alternative promoter usage. In addition there are at least five alternatively spliced sites, each of which may be spliced in up to seven different ways. Combinatorial splicing at each of these five sites may lead to the generation of at least 96 isoforms but for simplicity only individual splice events or observed combinations are explicitly described below. Beta-type isoforms share the possibility of alternative splicing at sites 4 and 5. Experimental confirmation may be lacking for some isoforms.</text>
</comment>
<comment type="tissue specificity">
    <text evidence="10 14">Brain (neuronal synapse).</text>
</comment>
<comment type="PTM">
    <text evidence="2">O-glycosylated; contains heparan sulfate. Heparan sulfate attachment is required for synapse development by mediating interactions with neuroligins and LRRTM2.</text>
</comment>
<comment type="miscellaneous">
    <text>Alpha-latrotoxin competes with alpha-dystroglycan for binding.</text>
</comment>
<comment type="similarity">
    <text evidence="18">Belongs to the neurexin family.</text>
</comment>
<reference key="1">
    <citation type="journal article" date="1992" name="Science">
        <title>Neurexins: synaptic cell surface proteins related to the alpha-latrotoxin receptor and laminin.</title>
        <authorList>
            <person name="Ushkaryov Y.A."/>
            <person name="Petrenko A.G."/>
            <person name="Geppert M."/>
            <person name="Suedhof T.C."/>
        </authorList>
    </citation>
    <scope>NUCLEOTIDE SEQUENCE [MRNA] (ISOFORM 13A)</scope>
    <scope>INTERACTION WITH ALPHA-LATROTOXIN</scope>
    <scope>TISSUE SPECIFICITY</scope>
    <scope>SUBCELLULAR LOCATION</scope>
    <scope>ALTERNATIVE SPLICING</scope>
    <source>
        <tissue>Brain</tissue>
    </source>
</reference>
<reference key="2">
    <citation type="journal article" date="1995" name="Neuron">
        <title>Cartography of neurexins: more than 1000 isoforms generated by alternative splicing and expressed in distinct subsets of neurons.</title>
        <authorList>
            <person name="Ullrich B."/>
            <person name="Ushkaryov Y.A."/>
            <person name="Suedhof T.C."/>
        </authorList>
    </citation>
    <scope>PARTIAL NUCLEOTIDE SEQUENCE [MRNA]</scope>
    <scope>TISSUE SPECIFICITY</scope>
    <scope>ALTERNATIVE SPLICING</scope>
</reference>
<reference key="3">
    <citation type="journal article" date="1998" name="J. Biol. Chem.">
        <title>Neurexophilin binding to alpha-neurexins. A single LNS domain functions as an independently folding ligand-binding unit.</title>
        <authorList>
            <person name="Missler M."/>
            <person name="Hammer R.E."/>
            <person name="Suedhof T.C."/>
        </authorList>
    </citation>
    <scope>PROTEIN SEQUENCE OF N-TERMINUS</scope>
    <scope>INTERACTION WITH NXPH1 AND NXPH3</scope>
</reference>
<reference key="4">
    <citation type="journal article" date="1996" name="J. Neurosci.">
        <title>CASK: a novel dlg/PSD95 homolog with an N-terminal calmodulin-dependent protein kinase domain identified by interaction with neurexins.</title>
        <authorList>
            <person name="Hata Y."/>
            <person name="Butz S."/>
            <person name="Suedhof T.C."/>
        </authorList>
    </citation>
    <scope>INTERACTION WITH CASK</scope>
</reference>
<reference key="5">
    <citation type="journal article" date="1999" name="Neuron">
        <title>Neurexins are functional alpha-latrotoxin receptors.</title>
        <authorList>
            <person name="Sugita S."/>
            <person name="Khvochtev M."/>
            <person name="Suedhof T.C."/>
        </authorList>
    </citation>
    <scope>INTERACTION WITH ALPHA-LATROTOXIN</scope>
</reference>
<reference key="6">
    <citation type="journal article" date="2001" name="J. Cell Biol.">
        <title>A stoichiometric complex of neurexins and dystroglycan in brain.</title>
        <authorList>
            <person name="Sugita S."/>
            <person name="Saito F."/>
            <person name="Tang J."/>
            <person name="Satz J."/>
            <person name="Campbell K."/>
            <person name="Suedhof T.C."/>
        </authorList>
    </citation>
    <scope>INTERACTION WITH DAG1</scope>
</reference>
<reference key="7">
    <citation type="journal article" date="2002" name="J. Neurosci.">
        <title>CASK participates in alternative tripartite complexes in which Mint 1 competes for binding with Caskin 1, a novel CASK-binding protein.</title>
        <authorList>
            <person name="Tabuchi K."/>
            <person name="Biederer T."/>
            <person name="Butz S."/>
            <person name="Suedhof T.C."/>
        </authorList>
    </citation>
    <scope>INTERACTION WITH CASK; CASKIN1 AND APBA1</scope>
</reference>
<reference key="8">
    <citation type="journal article" date="2009" name="Neuron">
        <title>LRRTM2 functions as a neurexin ligand in promoting excitatory synapse formation.</title>
        <authorList>
            <person name="Ko J."/>
            <person name="Fuccillo M.V."/>
            <person name="Malenka R.C."/>
            <person name="Sudhof T.C."/>
        </authorList>
    </citation>
    <scope>FUNCTION</scope>
    <scope>SUBCELLULAR LOCATION</scope>
    <scope>INTERACTION WITH LRRTM1; LRRTM2; LRRTM3 AND LRRTM4</scope>
</reference>
<reference key="9">
    <citation type="journal article" date="2009" name="Neuron">
        <title>LRRTM2 interacts with Neurexin1 and regulates excitatory synapse formation.</title>
        <authorList>
            <person name="de Wit J."/>
            <person name="Sylwestrak E."/>
            <person name="O'Sullivan M.L."/>
            <person name="Otto S."/>
            <person name="Tiglio K."/>
            <person name="Savas J.N."/>
            <person name="Yates J.R. III"/>
            <person name="Comoletti D."/>
            <person name="Taylor P."/>
            <person name="Ghosh A."/>
        </authorList>
    </citation>
    <scope>FUNCTION</scope>
    <scope>INTERACTION WITH LRRTM2</scope>
    <scope>SUBCELLULAR LOCATION</scope>
    <scope>IDENTIFICATION BY MASS SPECTROMETRY</scope>
</reference>
<reference key="10">
    <citation type="journal article" date="2014" name="Proc. Natl. Acad. Sci. U.S.A.">
        <title>Structure of Crumbs tail in complex with the PALS1 PDZ-SH3-GK tandem reveals a highly specific assembly mechanism for the apical Crumbs complex.</title>
        <authorList>
            <person name="Li Y."/>
            <person name="Wei Z."/>
            <person name="Yan Y."/>
            <person name="Wan Q."/>
            <person name="Du Q."/>
            <person name="Zhang M."/>
        </authorList>
    </citation>
    <scope>INTERACTION WITH CASK</scope>
</reference>
<reference key="11">
    <citation type="journal article" date="2007" name="Neuron">
        <title>Structures of neuroligin-1 and the neuroligin-1/neurexin-1 beta complex reveal specific protein-protein and protein-Ca2+ interactions.</title>
        <authorList>
            <person name="Arac D."/>
            <person name="Boucard A.A."/>
            <person name="Ozkan E."/>
            <person name="Strop P."/>
            <person name="Newell E."/>
            <person name="Sudhof T.C."/>
            <person name="Brunger A.T."/>
        </authorList>
    </citation>
    <scope>X-RAY CRYSTALLOGRAPHY (3.5 ANGSTROMS) OF 1146-1361 IN COMPLEX WITH NLGN4</scope>
</reference>
<gene>
    <name type="primary">Nrxn1</name>
</gene>
<sequence>MGTALVQHGGCCLLCLSLLLLGCWAELGSGLEFPGAEGQWTRFPKWNACCESEMSFQLKTRSARGLVLYFDDEGFCDFLELILTRGGRLQLSFSIFCAEPATLLADTPVNDGAWHSVRIRRQFRNTTLYIDRAEAKWVEVKSKRRDMTVFSGLFVGGLPPELRAAALKLTLASVREREPFKGWIRDVRVNSSQALPVDGSEVKLDEEPPNSGGGSPCEAGDEGDGGVCLNGGVCSVVDDQAVCDCSRTGFRGKDCSQEDNNVEGLAHLMMGDQGKSKEDNNVEGLAHLMMGDQGKEEYIATFKGSEYFCYDLSQNPIQSSSDEITLSFKTLQRNGLMLHTGKSADYVNLALKNGAVSLVINLGSGAFEALVEPVNGKFNDNAWHDVKVTRNLRQHSGIGHAMVNKLHCSVTISVDGILTTTGYTQEDYTMLGSDDFFYVGGSPSTADLPGSPVSNNFMGCLKEVVYKNNDVRLELSRLAKQGDPKMKIHGVVAFKCENVATLDPITFETPESFISLPKWNAKKTGSISFDFRTTEPNGLILFSHGKPRHQKDAKHPQMIKVDFFAIEMLDGHLYLLLDMGSGTIKIKALQKKVNDGEWYHVDFQRDGRSGTISVNTLRTPYTAPGESEILDLDDELYLGGLPENKAGLVFPTEVWTALLNYGYVGCIRDLFIDGQSKDIRQMAEIQSTAGVKPSCSRETAKPCLSNPCKNNGMCRDGWNRYVCDCSGTGYLGRSCEREATVLSYDGSMFMKIQLPVVMHTEAEDVSLRFRSQRAYGILMATTSRDSADTLRLELDAGRVKLTVNLDCIRINCNSSKGPETLFAGYNLNDNEWHTVRVVRRGKSLKLTVDDQQAMTGQMAGDHTRLEFHNIETGIITERRYLSSVPSNFIGHLQSLTFNGMAYIDLCKNGDIDYCELNARFGFRNIIADPVTFKTKSSYVALATLQAYTSMHLFFQFKTTSLDGLILYNSGDGNDFIVVELVKGYLHYVFDLGNGANLIKGSSNKPLNDNQWHNVMISRDTSNLHTVKIDTKITTQITAGARNLDLKSDLYIGGVAKETYKSLPKLVHAKEGFQGCLASVDLNGRLPDLISDALFCNGQIERGCEGPSTTCQEDSCSNQGVCLQQWDGFSCDCSMTSFSGPLCNDPGTTYIFSKGGGQITHKWPPNDRPSTRADRLAIGFSTVQKEAVLVRVDSSSGLGDYLELHIHQGKIGVKFNVGTDDIAIEESNAIINDGKYHVVRFTRSGGNATLQVDSWPVIERYPAGNNDNERLAIARQRIPYRLGRVVDEWLLDKGRQLTIFNSQATIIIGGKEQGQPFQGQLSGLYYNGLKVLNMAAENDANIAIVGNVRLVGEVPSSMTTESTATAMQSEMSTSIMETTTTLATSTARRGKPPTKEPISQTTDDILVASAECPSDDEDIDPCEPSSGGLANPTRVGGREPYPGSAEVIRESSSTTGMVVGIVAAAALCILILLYAMYKYRNRDEGSYHVDESRNYISNSAQSNGAVVKEKQPSSAKSANKNKKNKDKEYYV</sequence>
<proteinExistence type="evidence at protein level"/>
<dbReference type="EMBL" id="M96374">
    <property type="protein sequence ID" value="AAA41704.1"/>
    <property type="molecule type" value="mRNA"/>
</dbReference>
<dbReference type="PIR" id="A40228">
    <property type="entry name" value="A40228"/>
</dbReference>
<dbReference type="RefSeq" id="NP_068535.2">
    <property type="nucleotide sequence ID" value="NM_021767.2"/>
</dbReference>
<dbReference type="PDB" id="3BIW">
    <property type="method" value="X-ray"/>
    <property type="resolution" value="3.50 A"/>
    <property type="chains" value="E/F/G/H=1146-1361"/>
</dbReference>
<dbReference type="PDBsum" id="3BIW"/>
<dbReference type="SMR" id="Q63372"/>
<dbReference type="BioGRID" id="248813">
    <property type="interactions" value="6"/>
</dbReference>
<dbReference type="FunCoup" id="Q63372">
    <property type="interactions" value="2801"/>
</dbReference>
<dbReference type="MINT" id="Q63372"/>
<dbReference type="STRING" id="10116.ENSRNOP00000066979"/>
<dbReference type="GlyCosmos" id="Q63372">
    <property type="glycosylation" value="4 sites, No reported glycans"/>
</dbReference>
<dbReference type="GlyGen" id="Q63372">
    <property type="glycosylation" value="5 sites"/>
</dbReference>
<dbReference type="iPTMnet" id="Q63372"/>
<dbReference type="PhosphoSitePlus" id="Q63372"/>
<dbReference type="GeneID" id="60391"/>
<dbReference type="KEGG" id="rno:60391"/>
<dbReference type="AGR" id="RGD:628659"/>
<dbReference type="CTD" id="9378"/>
<dbReference type="RGD" id="628659">
    <property type="gene designation" value="Nrxn1"/>
</dbReference>
<dbReference type="InParanoid" id="Q63372"/>
<dbReference type="Reactome" id="R-RNO-6794361">
    <property type="pathway name" value="Neurexins and neuroligins"/>
</dbReference>
<dbReference type="EvolutionaryTrace" id="Q63372"/>
<dbReference type="Proteomes" id="UP000002494">
    <property type="component" value="Unplaced"/>
</dbReference>
<dbReference type="GO" id="GO:0042995">
    <property type="term" value="C:cell projection"/>
    <property type="evidence" value="ECO:0007669"/>
    <property type="project" value="UniProtKB-KW"/>
</dbReference>
<dbReference type="GO" id="GO:0009986">
    <property type="term" value="C:cell surface"/>
    <property type="evidence" value="ECO:0000250"/>
    <property type="project" value="BHF-UCL"/>
</dbReference>
<dbReference type="GO" id="GO:0005783">
    <property type="term" value="C:endoplasmic reticulum"/>
    <property type="evidence" value="ECO:0000250"/>
    <property type="project" value="BHF-UCL"/>
</dbReference>
<dbReference type="GO" id="GO:0098982">
    <property type="term" value="C:GABA-ergic synapse"/>
    <property type="evidence" value="ECO:0000266"/>
    <property type="project" value="RGD"/>
</dbReference>
<dbReference type="GO" id="GO:0098978">
    <property type="term" value="C:glutamatergic synapse"/>
    <property type="evidence" value="ECO:0000266"/>
    <property type="project" value="RGD"/>
</dbReference>
<dbReference type="GO" id="GO:0043025">
    <property type="term" value="C:neuronal cell body"/>
    <property type="evidence" value="ECO:0000250"/>
    <property type="project" value="BHF-UCL"/>
</dbReference>
<dbReference type="GO" id="GO:0031965">
    <property type="term" value="C:nuclear membrane"/>
    <property type="evidence" value="ECO:0000250"/>
    <property type="project" value="BHF-UCL"/>
</dbReference>
<dbReference type="GO" id="GO:0005886">
    <property type="term" value="C:plasma membrane"/>
    <property type="evidence" value="ECO:0000314"/>
    <property type="project" value="MGI"/>
</dbReference>
<dbReference type="GO" id="GO:0048787">
    <property type="term" value="C:presynaptic active zone membrane"/>
    <property type="evidence" value="ECO:0000266"/>
    <property type="project" value="RGD"/>
</dbReference>
<dbReference type="GO" id="GO:0042734">
    <property type="term" value="C:presynaptic membrane"/>
    <property type="evidence" value="ECO:0000250"/>
    <property type="project" value="BHF-UCL"/>
</dbReference>
<dbReference type="GO" id="GO:0032991">
    <property type="term" value="C:protein-containing complex"/>
    <property type="evidence" value="ECO:0000266"/>
    <property type="project" value="RGD"/>
</dbReference>
<dbReference type="GO" id="GO:0098685">
    <property type="term" value="C:Schaffer collateral - CA1 synapse"/>
    <property type="evidence" value="ECO:0000266"/>
    <property type="project" value="RGD"/>
</dbReference>
<dbReference type="GO" id="GO:0036057">
    <property type="term" value="C:slit diaphragm"/>
    <property type="evidence" value="ECO:0000314"/>
    <property type="project" value="RGD"/>
</dbReference>
<dbReference type="GO" id="GO:0098820">
    <property type="term" value="C:trans-synaptic protein complex"/>
    <property type="evidence" value="ECO:0000266"/>
    <property type="project" value="RGD"/>
</dbReference>
<dbReference type="GO" id="GO:0031982">
    <property type="term" value="C:vesicle"/>
    <property type="evidence" value="ECO:0000250"/>
    <property type="project" value="BHF-UCL"/>
</dbReference>
<dbReference type="GO" id="GO:0033130">
    <property type="term" value="F:acetylcholine receptor binding"/>
    <property type="evidence" value="ECO:0000250"/>
    <property type="project" value="BHF-UCL"/>
</dbReference>
<dbReference type="GO" id="GO:0005246">
    <property type="term" value="F:calcium channel regulator activity"/>
    <property type="evidence" value="ECO:0000250"/>
    <property type="project" value="BHF-UCL"/>
</dbReference>
<dbReference type="GO" id="GO:0005509">
    <property type="term" value="F:calcium ion binding"/>
    <property type="evidence" value="ECO:0000314"/>
    <property type="project" value="RGD"/>
</dbReference>
<dbReference type="GO" id="GO:0050839">
    <property type="term" value="F:cell adhesion molecule binding"/>
    <property type="evidence" value="ECO:0000250"/>
    <property type="project" value="BHF-UCL"/>
</dbReference>
<dbReference type="GO" id="GO:0097109">
    <property type="term" value="F:neuroligin family protein binding"/>
    <property type="evidence" value="ECO:0000250"/>
    <property type="project" value="BHF-UCL"/>
</dbReference>
<dbReference type="GO" id="GO:0044877">
    <property type="term" value="F:protein-containing complex binding"/>
    <property type="evidence" value="ECO:0000314"/>
    <property type="project" value="RGD"/>
</dbReference>
<dbReference type="GO" id="GO:0005105">
    <property type="term" value="F:type 1 fibroblast growth factor receptor binding"/>
    <property type="evidence" value="ECO:0000266"/>
    <property type="project" value="RGD"/>
</dbReference>
<dbReference type="GO" id="GO:0030534">
    <property type="term" value="P:adult behavior"/>
    <property type="evidence" value="ECO:0000250"/>
    <property type="project" value="BHF-UCL"/>
</dbReference>
<dbReference type="GO" id="GO:0007268">
    <property type="term" value="P:chemical synaptic transmission"/>
    <property type="evidence" value="ECO:0000250"/>
    <property type="project" value="BHF-UCL"/>
</dbReference>
<dbReference type="GO" id="GO:0007623">
    <property type="term" value="P:circadian rhythm"/>
    <property type="evidence" value="ECO:0000270"/>
    <property type="project" value="RGD"/>
</dbReference>
<dbReference type="GO" id="GO:0097116">
    <property type="term" value="P:gephyrin clustering involved in postsynaptic density assembly"/>
    <property type="evidence" value="ECO:0000250"/>
    <property type="project" value="BHF-UCL"/>
</dbReference>
<dbReference type="GO" id="GO:0007612">
    <property type="term" value="P:learning"/>
    <property type="evidence" value="ECO:0000250"/>
    <property type="project" value="BHF-UCL"/>
</dbReference>
<dbReference type="GO" id="GO:0010629">
    <property type="term" value="P:negative regulation of gene expression"/>
    <property type="evidence" value="ECO:0000266"/>
    <property type="project" value="RGD"/>
</dbReference>
<dbReference type="GO" id="GO:0097118">
    <property type="term" value="P:neuroligin clustering involved in postsynaptic membrane assembly"/>
    <property type="evidence" value="ECO:0000250"/>
    <property type="project" value="BHF-UCL"/>
</dbReference>
<dbReference type="GO" id="GO:0050885">
    <property type="term" value="P:neuromuscular process controlling balance"/>
    <property type="evidence" value="ECO:0000250"/>
    <property type="project" value="BHF-UCL"/>
</dbReference>
<dbReference type="GO" id="GO:0031175">
    <property type="term" value="P:neuron projection development"/>
    <property type="evidence" value="ECO:0000266"/>
    <property type="project" value="RGD"/>
</dbReference>
<dbReference type="GO" id="GO:0007269">
    <property type="term" value="P:neurotransmitter secretion"/>
    <property type="evidence" value="ECO:0000250"/>
    <property type="project" value="BHF-UCL"/>
</dbReference>
<dbReference type="GO" id="GO:0043950">
    <property type="term" value="P:positive regulation of cAMP-mediated signaling"/>
    <property type="evidence" value="ECO:0000266"/>
    <property type="project" value="RGD"/>
</dbReference>
<dbReference type="GO" id="GO:0070374">
    <property type="term" value="P:positive regulation of ERK1 and ERK2 cascade"/>
    <property type="evidence" value="ECO:0000266"/>
    <property type="project" value="RGD"/>
</dbReference>
<dbReference type="GO" id="GO:2000463">
    <property type="term" value="P:positive regulation of excitatory postsynaptic potential"/>
    <property type="evidence" value="ECO:0000250"/>
    <property type="project" value="BHF-UCL"/>
</dbReference>
<dbReference type="GO" id="GO:0045743">
    <property type="term" value="P:positive regulation of fibroblast growth factor receptor signaling pathway"/>
    <property type="evidence" value="ECO:0000266"/>
    <property type="project" value="RGD"/>
</dbReference>
<dbReference type="GO" id="GO:0010628">
    <property type="term" value="P:positive regulation of gene expression"/>
    <property type="evidence" value="ECO:0000266"/>
    <property type="project" value="RGD"/>
</dbReference>
<dbReference type="GO" id="GO:0051897">
    <property type="term" value="P:positive regulation of phosphatidylinositol 3-kinase/protein kinase B signal transduction"/>
    <property type="evidence" value="ECO:0000266"/>
    <property type="project" value="RGD"/>
</dbReference>
<dbReference type="GO" id="GO:1900738">
    <property type="term" value="P:positive regulation of phospholipase C-activating G protein-coupled receptor signaling pathway"/>
    <property type="evidence" value="ECO:0000266"/>
    <property type="project" value="RGD"/>
</dbReference>
<dbReference type="GO" id="GO:0051965">
    <property type="term" value="P:positive regulation of synapse assembly"/>
    <property type="evidence" value="ECO:0000250"/>
    <property type="project" value="BHF-UCL"/>
</dbReference>
<dbReference type="GO" id="GO:0090129">
    <property type="term" value="P:positive regulation of synapse maturation"/>
    <property type="evidence" value="ECO:0000250"/>
    <property type="project" value="BHF-UCL"/>
</dbReference>
<dbReference type="GO" id="GO:0051968">
    <property type="term" value="P:positive regulation of synaptic transmission, glutamatergic"/>
    <property type="evidence" value="ECO:0000250"/>
    <property type="project" value="BHF-UCL"/>
</dbReference>
<dbReference type="GO" id="GO:0097119">
    <property type="term" value="P:postsynaptic density protein 95 clustering"/>
    <property type="evidence" value="ECO:0000250"/>
    <property type="project" value="BHF-UCL"/>
</dbReference>
<dbReference type="GO" id="GO:0097104">
    <property type="term" value="P:postsynaptic membrane assembly"/>
    <property type="evidence" value="ECO:0000250"/>
    <property type="project" value="BHF-UCL"/>
</dbReference>
<dbReference type="GO" id="GO:0060134">
    <property type="term" value="P:prepulse inhibition"/>
    <property type="evidence" value="ECO:0000250"/>
    <property type="project" value="BHF-UCL"/>
</dbReference>
<dbReference type="GO" id="GO:0099054">
    <property type="term" value="P:presynapse assembly"/>
    <property type="evidence" value="ECO:0000314"/>
    <property type="project" value="SynGO"/>
</dbReference>
<dbReference type="GO" id="GO:2000821">
    <property type="term" value="P:regulation of grooming behavior"/>
    <property type="evidence" value="ECO:0000250"/>
    <property type="project" value="BHF-UCL"/>
</dbReference>
<dbReference type="GO" id="GO:0099151">
    <property type="term" value="P:regulation of postsynaptic density assembly"/>
    <property type="evidence" value="ECO:0000266"/>
    <property type="project" value="RGD"/>
</dbReference>
<dbReference type="GO" id="GO:0099150">
    <property type="term" value="P:regulation of postsynaptic specialization assembly"/>
    <property type="evidence" value="ECO:0000266"/>
    <property type="project" value="RGD"/>
</dbReference>
<dbReference type="GO" id="GO:1905606">
    <property type="term" value="P:regulation of presynapse assembly"/>
    <property type="evidence" value="ECO:0000266"/>
    <property type="project" value="RGD"/>
</dbReference>
<dbReference type="GO" id="GO:0098693">
    <property type="term" value="P:regulation of synaptic vesicle cycle"/>
    <property type="evidence" value="ECO:0000266"/>
    <property type="project" value="RGD"/>
</dbReference>
<dbReference type="GO" id="GO:0150036">
    <property type="term" value="P:regulation of trans-synaptic signaling by endocannabinoid, modulating synaptic transmission"/>
    <property type="evidence" value="ECO:0000266"/>
    <property type="project" value="RGD"/>
</dbReference>
<dbReference type="GO" id="GO:0035176">
    <property type="term" value="P:social behavior"/>
    <property type="evidence" value="ECO:0000266"/>
    <property type="project" value="RGD"/>
</dbReference>
<dbReference type="GO" id="GO:0007416">
    <property type="term" value="P:synapse assembly"/>
    <property type="evidence" value="ECO:0000250"/>
    <property type="project" value="BHF-UCL"/>
</dbReference>
<dbReference type="GO" id="GO:0099560">
    <property type="term" value="P:synaptic membrane adhesion"/>
    <property type="evidence" value="ECO:0000266"/>
    <property type="project" value="RGD"/>
</dbReference>
<dbReference type="GO" id="GO:0099550">
    <property type="term" value="P:trans-synaptic signaling, modulating synaptic transmission"/>
    <property type="evidence" value="ECO:0000266"/>
    <property type="project" value="RGD"/>
</dbReference>
<dbReference type="GO" id="GO:0006904">
    <property type="term" value="P:vesicle docking involved in exocytosis"/>
    <property type="evidence" value="ECO:0000315"/>
    <property type="project" value="MGI"/>
</dbReference>
<dbReference type="GO" id="GO:0042297">
    <property type="term" value="P:vocal learning"/>
    <property type="evidence" value="ECO:0000266"/>
    <property type="project" value="RGD"/>
</dbReference>
<dbReference type="GO" id="GO:0071625">
    <property type="term" value="P:vocalization behavior"/>
    <property type="evidence" value="ECO:0000266"/>
    <property type="project" value="RGD"/>
</dbReference>
<dbReference type="CDD" id="cd00054">
    <property type="entry name" value="EGF_CA"/>
    <property type="match status" value="1"/>
</dbReference>
<dbReference type="CDD" id="cd00110">
    <property type="entry name" value="LamG"/>
    <property type="match status" value="6"/>
</dbReference>
<dbReference type="FunFam" id="2.10.25.10:FF:000015">
    <property type="entry name" value="neurexin-1 isoform X1"/>
    <property type="match status" value="1"/>
</dbReference>
<dbReference type="FunFam" id="2.10.25.10:FF:000029">
    <property type="entry name" value="neurexin-1 isoform X1"/>
    <property type="match status" value="1"/>
</dbReference>
<dbReference type="FunFam" id="2.60.120.200:FF:000001">
    <property type="entry name" value="neurexin-1 isoform X1"/>
    <property type="match status" value="1"/>
</dbReference>
<dbReference type="FunFam" id="2.60.120.200:FF:000003">
    <property type="entry name" value="neurexin-1 isoform X1"/>
    <property type="match status" value="1"/>
</dbReference>
<dbReference type="FunFam" id="2.60.120.200:FF:000004">
    <property type="entry name" value="neurexin-1 isoform X1"/>
    <property type="match status" value="1"/>
</dbReference>
<dbReference type="FunFam" id="2.60.120.200:FF:000005">
    <property type="entry name" value="neurexin-1 isoform X1"/>
    <property type="match status" value="1"/>
</dbReference>
<dbReference type="FunFam" id="2.60.120.200:FF:000007">
    <property type="entry name" value="neurexin-1 isoform X1"/>
    <property type="match status" value="1"/>
</dbReference>
<dbReference type="FunFam" id="2.60.120.200:FF:000014">
    <property type="entry name" value="neurexin-1 isoform X1"/>
    <property type="match status" value="1"/>
</dbReference>
<dbReference type="Gene3D" id="2.60.120.200">
    <property type="match status" value="6"/>
</dbReference>
<dbReference type="Gene3D" id="2.10.25.10">
    <property type="entry name" value="Laminin"/>
    <property type="match status" value="3"/>
</dbReference>
<dbReference type="InterPro" id="IPR013320">
    <property type="entry name" value="ConA-like_dom_sf"/>
</dbReference>
<dbReference type="InterPro" id="IPR000742">
    <property type="entry name" value="EGF-like_dom"/>
</dbReference>
<dbReference type="InterPro" id="IPR000152">
    <property type="entry name" value="EGF-type_Asp/Asn_hydroxyl_site"/>
</dbReference>
<dbReference type="InterPro" id="IPR001791">
    <property type="entry name" value="Laminin_G"/>
</dbReference>
<dbReference type="InterPro" id="IPR003585">
    <property type="entry name" value="Neurexin-like"/>
</dbReference>
<dbReference type="InterPro" id="IPR050372">
    <property type="entry name" value="Neurexin-related_CASP"/>
</dbReference>
<dbReference type="PANTHER" id="PTHR15036">
    <property type="entry name" value="PIKACHURIN-LIKE PROTEIN"/>
    <property type="match status" value="1"/>
</dbReference>
<dbReference type="PANTHER" id="PTHR15036:SF85">
    <property type="entry name" value="SP2353, ISOFORM A"/>
    <property type="match status" value="1"/>
</dbReference>
<dbReference type="Pfam" id="PF00008">
    <property type="entry name" value="EGF"/>
    <property type="match status" value="1"/>
</dbReference>
<dbReference type="Pfam" id="PF02210">
    <property type="entry name" value="Laminin_G_2"/>
    <property type="match status" value="6"/>
</dbReference>
<dbReference type="SMART" id="SM00294">
    <property type="entry name" value="4.1m"/>
    <property type="match status" value="1"/>
</dbReference>
<dbReference type="SMART" id="SM00181">
    <property type="entry name" value="EGF"/>
    <property type="match status" value="3"/>
</dbReference>
<dbReference type="SMART" id="SM00282">
    <property type="entry name" value="LamG"/>
    <property type="match status" value="6"/>
</dbReference>
<dbReference type="SUPFAM" id="SSF49899">
    <property type="entry name" value="Concanavalin A-like lectins/glucanases"/>
    <property type="match status" value="6"/>
</dbReference>
<dbReference type="PROSITE" id="PS00010">
    <property type="entry name" value="ASX_HYDROXYL"/>
    <property type="match status" value="1"/>
</dbReference>
<dbReference type="PROSITE" id="PS50026">
    <property type="entry name" value="EGF_3"/>
    <property type="match status" value="3"/>
</dbReference>
<dbReference type="PROSITE" id="PS50025">
    <property type="entry name" value="LAM_G_DOMAIN"/>
    <property type="match status" value="6"/>
</dbReference>
<name>NRX1A_RAT</name>
<evidence type="ECO:0000250" key="1">
    <source>
        <dbReference type="UniProtKB" id="Q28146"/>
    </source>
</evidence>
<evidence type="ECO:0000250" key="2">
    <source>
        <dbReference type="UniProtKB" id="Q9CS84"/>
    </source>
</evidence>
<evidence type="ECO:0000255" key="3"/>
<evidence type="ECO:0000255" key="4">
    <source>
        <dbReference type="PROSITE-ProRule" id="PRU00076"/>
    </source>
</evidence>
<evidence type="ECO:0000255" key="5">
    <source>
        <dbReference type="PROSITE-ProRule" id="PRU00122"/>
    </source>
</evidence>
<evidence type="ECO:0000256" key="6">
    <source>
        <dbReference type="SAM" id="MobiDB-lite"/>
    </source>
</evidence>
<evidence type="ECO:0000269" key="7">
    <source>
    </source>
</evidence>
<evidence type="ECO:0000269" key="8">
    <source>
    </source>
</evidence>
<evidence type="ECO:0000269" key="9">
    <source>
    </source>
</evidence>
<evidence type="ECO:0000269" key="10">
    <source>
    </source>
</evidence>
<evidence type="ECO:0000269" key="11">
    <source>
    </source>
</evidence>
<evidence type="ECO:0000269" key="12">
    <source>
    </source>
</evidence>
<evidence type="ECO:0000269" key="13">
    <source>
    </source>
</evidence>
<evidence type="ECO:0000269" key="14">
    <source>
    </source>
</evidence>
<evidence type="ECO:0000269" key="15">
    <source>
    </source>
</evidence>
<evidence type="ECO:0000269" key="16">
    <source>
    </source>
</evidence>
<evidence type="ECO:0000303" key="17">
    <source>
    </source>
</evidence>
<evidence type="ECO:0000305" key="18"/>
<evidence type="ECO:0007829" key="19">
    <source>
        <dbReference type="PDB" id="3BIW"/>
    </source>
</evidence>